<keyword id="KW-0997">Cell inner membrane</keyword>
<keyword id="KW-1003">Cell membrane</keyword>
<keyword id="KW-0472">Membrane</keyword>
<keyword id="KW-1185">Reference proteome</keyword>
<keyword id="KW-0812">Transmembrane</keyword>
<keyword id="KW-1133">Transmembrane helix</keyword>
<gene>
    <name evidence="1" type="primary">frdC</name>
    <name type="ordered locus">E2348C_4480</name>
</gene>
<organism>
    <name type="scientific">Escherichia coli O127:H6 (strain E2348/69 / EPEC)</name>
    <dbReference type="NCBI Taxonomy" id="574521"/>
    <lineage>
        <taxon>Bacteria</taxon>
        <taxon>Pseudomonadati</taxon>
        <taxon>Pseudomonadota</taxon>
        <taxon>Gammaproteobacteria</taxon>
        <taxon>Enterobacterales</taxon>
        <taxon>Enterobacteriaceae</taxon>
        <taxon>Escherichia</taxon>
    </lineage>
</organism>
<reference key="1">
    <citation type="journal article" date="2009" name="J. Bacteriol.">
        <title>Complete genome sequence and comparative genome analysis of enteropathogenic Escherichia coli O127:H6 strain E2348/69.</title>
        <authorList>
            <person name="Iguchi A."/>
            <person name="Thomson N.R."/>
            <person name="Ogura Y."/>
            <person name="Saunders D."/>
            <person name="Ooka T."/>
            <person name="Henderson I.R."/>
            <person name="Harris D."/>
            <person name="Asadulghani M."/>
            <person name="Kurokawa K."/>
            <person name="Dean P."/>
            <person name="Kenny B."/>
            <person name="Quail M.A."/>
            <person name="Thurston S."/>
            <person name="Dougan G."/>
            <person name="Hayashi T."/>
            <person name="Parkhill J."/>
            <person name="Frankel G."/>
        </authorList>
    </citation>
    <scope>NUCLEOTIDE SEQUENCE [LARGE SCALE GENOMIC DNA]</scope>
    <source>
        <strain>E2348/69 / EPEC</strain>
    </source>
</reference>
<name>FRDC_ECO27</name>
<proteinExistence type="inferred from homology"/>
<evidence type="ECO:0000255" key="1">
    <source>
        <dbReference type="HAMAP-Rule" id="MF_00708"/>
    </source>
</evidence>
<feature type="chain" id="PRO_1000147949" description="Fumarate reductase subunit C">
    <location>
        <begin position="1"/>
        <end position="131"/>
    </location>
</feature>
<feature type="transmembrane region" description="Helical" evidence="1">
    <location>
        <begin position="30"/>
        <end position="50"/>
    </location>
</feature>
<feature type="transmembrane region" description="Helical" evidence="1">
    <location>
        <begin position="63"/>
        <end position="83"/>
    </location>
</feature>
<feature type="transmembrane region" description="Helical" evidence="1">
    <location>
        <begin position="109"/>
        <end position="129"/>
    </location>
</feature>
<comment type="function">
    <text evidence="1">Two distinct, membrane-bound, FAD-containing enzymes are responsible for the catalysis of fumarate and succinate interconversion; fumarate reductase is used in anaerobic growth, and succinate dehydrogenase is used in aerobic growth. Anchors the catalytic components of the fumarate reductase complex to the cell inner membrane, binds quinones.</text>
</comment>
<comment type="subunit">
    <text evidence="1">Part of an enzyme complex containing four subunits: a flavoprotein (FrdA), an iron-sulfur protein (FrdB), and two hydrophobic anchor proteins (FrdC and FrdD).</text>
</comment>
<comment type="subcellular location">
    <subcellularLocation>
        <location evidence="1">Cell inner membrane</location>
        <topology evidence="1">Multi-pass membrane protein</topology>
    </subcellularLocation>
</comment>
<comment type="similarity">
    <text evidence="1">Belongs to the FrdC family.</text>
</comment>
<dbReference type="EMBL" id="FM180568">
    <property type="protein sequence ID" value="CAS12028.1"/>
    <property type="molecule type" value="Genomic_DNA"/>
</dbReference>
<dbReference type="RefSeq" id="WP_000208757.1">
    <property type="nucleotide sequence ID" value="NC_011601.1"/>
</dbReference>
<dbReference type="SMR" id="B7UPX4"/>
<dbReference type="GeneID" id="93777670"/>
<dbReference type="KEGG" id="ecg:E2348C_4480"/>
<dbReference type="HOGENOM" id="CLU_156492_0_0_6"/>
<dbReference type="Proteomes" id="UP000008205">
    <property type="component" value="Chromosome"/>
</dbReference>
<dbReference type="GO" id="GO:0045283">
    <property type="term" value="C:fumarate reductase complex"/>
    <property type="evidence" value="ECO:0007669"/>
    <property type="project" value="UniProtKB-UniRule"/>
</dbReference>
<dbReference type="GO" id="GO:0005886">
    <property type="term" value="C:plasma membrane"/>
    <property type="evidence" value="ECO:0007669"/>
    <property type="project" value="UniProtKB-SubCell"/>
</dbReference>
<dbReference type="GO" id="GO:0000104">
    <property type="term" value="F:succinate dehydrogenase activity"/>
    <property type="evidence" value="ECO:0007669"/>
    <property type="project" value="UniProtKB-UniRule"/>
</dbReference>
<dbReference type="CDD" id="cd00546">
    <property type="entry name" value="QFR_TypeD_subunitC"/>
    <property type="match status" value="1"/>
</dbReference>
<dbReference type="FunFam" id="1.20.1300.10:FF:000003">
    <property type="entry name" value="Fumarate reductase subunit C"/>
    <property type="match status" value="1"/>
</dbReference>
<dbReference type="Gene3D" id="1.20.1300.10">
    <property type="entry name" value="Fumarate reductase/succinate dehydrogenase, transmembrane subunit"/>
    <property type="match status" value="1"/>
</dbReference>
<dbReference type="HAMAP" id="MF_00708">
    <property type="entry name" value="Fumarate_red_C"/>
    <property type="match status" value="1"/>
</dbReference>
<dbReference type="InterPro" id="IPR003510">
    <property type="entry name" value="Fumarate_red_C"/>
</dbReference>
<dbReference type="InterPro" id="IPR034804">
    <property type="entry name" value="SQR/QFR_C/D"/>
</dbReference>
<dbReference type="NCBIfam" id="NF003445">
    <property type="entry name" value="PRK04987.1"/>
    <property type="match status" value="1"/>
</dbReference>
<dbReference type="Pfam" id="PF02300">
    <property type="entry name" value="Fumarate_red_C"/>
    <property type="match status" value="1"/>
</dbReference>
<dbReference type="PIRSF" id="PIRSF000180">
    <property type="entry name" value="FrdC"/>
    <property type="match status" value="1"/>
</dbReference>
<dbReference type="SUPFAM" id="SSF81343">
    <property type="entry name" value="Fumarate reductase respiratory complex transmembrane subunits"/>
    <property type="match status" value="1"/>
</dbReference>
<accession>B7UPX4</accession>
<sequence>MTTKRKPYVRPMTSTWWKKLPFYRFYMLREGTAVPAVWFSIELIFGLFALKNGPEAWAGFVDFLQNPVIVIINLITLAAALLHTKTWFELAPKAANIIVKDEKMGPEPIIKSLWAVTVVATIVILFVALYW</sequence>
<protein>
    <recommendedName>
        <fullName evidence="1">Fumarate reductase subunit C</fullName>
    </recommendedName>
    <alternativeName>
        <fullName evidence="1">Fumarate reductase 15 kDa hydrophobic protein</fullName>
    </alternativeName>
    <alternativeName>
        <fullName evidence="1">Quinol-fumarate reductase subunit C</fullName>
        <shortName evidence="1">QFR subunit C</shortName>
    </alternativeName>
</protein>